<evidence type="ECO:0000250" key="1"/>
<evidence type="ECO:0000255" key="2">
    <source>
        <dbReference type="PROSITE-ProRule" id="PRU00236"/>
    </source>
</evidence>
<evidence type="ECO:0000256" key="3">
    <source>
        <dbReference type="SAM" id="MobiDB-lite"/>
    </source>
</evidence>
<evidence type="ECO:0000269" key="4">
    <source>
    </source>
</evidence>
<evidence type="ECO:0000305" key="5"/>
<keyword id="KW-0479">Metal-binding</keyword>
<keyword id="KW-0520">NAD</keyword>
<keyword id="KW-0539">Nucleus</keyword>
<keyword id="KW-1185">Reference proteome</keyword>
<keyword id="KW-0678">Repressor</keyword>
<keyword id="KW-0804">Transcription</keyword>
<keyword id="KW-0805">Transcription regulation</keyword>
<keyword id="KW-0808">Transferase</keyword>
<keyword id="KW-0862">Zinc</keyword>
<protein>
    <recommendedName>
        <fullName>NAD-dependent protein deacetylase hst4</fullName>
        <ecNumber evidence="2">2.3.1.286</ecNumber>
    </recommendedName>
    <alternativeName>
        <fullName>Homologous to SIR2 protein 4</fullName>
    </alternativeName>
    <alternativeName>
        <fullName>Regulatory protein SIR2 homolog 4</fullName>
    </alternativeName>
</protein>
<feature type="chain" id="PRO_0000110278" description="NAD-dependent protein deacetylase hst4">
    <location>
        <begin position="1"/>
        <end position="415"/>
    </location>
</feature>
<feature type="domain" description="Deacetylase sirtuin-type" evidence="2">
    <location>
        <begin position="40"/>
        <end position="337"/>
    </location>
</feature>
<feature type="region of interest" description="Disordered" evidence="3">
    <location>
        <begin position="1"/>
        <end position="26"/>
    </location>
</feature>
<feature type="active site" description="Proton acceptor" evidence="2">
    <location>
        <position position="184"/>
    </location>
</feature>
<feature type="binding site" evidence="1">
    <location>
        <begin position="65"/>
        <end position="84"/>
    </location>
    <ligand>
        <name>NAD(+)</name>
        <dbReference type="ChEBI" id="CHEBI:57540"/>
    </ligand>
</feature>
<feature type="binding site" evidence="1">
    <location>
        <begin position="153"/>
        <end position="156"/>
    </location>
    <ligand>
        <name>NAD(+)</name>
        <dbReference type="ChEBI" id="CHEBI:57540"/>
    </ligand>
</feature>
<feature type="binding site" evidence="2">
    <location>
        <position position="192"/>
    </location>
    <ligand>
        <name>Zn(2+)</name>
        <dbReference type="ChEBI" id="CHEBI:29105"/>
    </ligand>
</feature>
<feature type="binding site" evidence="2">
    <location>
        <position position="195"/>
    </location>
    <ligand>
        <name>Zn(2+)</name>
        <dbReference type="ChEBI" id="CHEBI:29105"/>
    </ligand>
</feature>
<feature type="binding site" evidence="2">
    <location>
        <position position="214"/>
    </location>
    <ligand>
        <name>Zn(2+)</name>
        <dbReference type="ChEBI" id="CHEBI:29105"/>
    </ligand>
</feature>
<feature type="binding site" evidence="2">
    <location>
        <position position="217"/>
    </location>
    <ligand>
        <name>Zn(2+)</name>
        <dbReference type="ChEBI" id="CHEBI:29105"/>
    </ligand>
</feature>
<feature type="binding site" evidence="1">
    <location>
        <begin position="273"/>
        <end position="275"/>
    </location>
    <ligand>
        <name>NAD(+)</name>
        <dbReference type="ChEBI" id="CHEBI:57540"/>
    </ligand>
</feature>
<feature type="binding site" evidence="1">
    <location>
        <begin position="303"/>
        <end position="305"/>
    </location>
    <ligand>
        <name>NAD(+)</name>
        <dbReference type="ChEBI" id="CHEBI:57540"/>
    </ligand>
</feature>
<feature type="binding site" evidence="1">
    <location>
        <position position="323"/>
    </location>
    <ligand>
        <name>NAD(+)</name>
        <dbReference type="ChEBI" id="CHEBI:57540"/>
    </ligand>
</feature>
<dbReference type="EC" id="2.3.1.286" evidence="2"/>
<dbReference type="EMBL" id="AF173939">
    <property type="protein sequence ID" value="AAD53752.1"/>
    <property type="molecule type" value="mRNA"/>
</dbReference>
<dbReference type="EMBL" id="CU329670">
    <property type="protein sequence ID" value="CAB66167.1"/>
    <property type="molecule type" value="Genomic_DNA"/>
</dbReference>
<dbReference type="PIR" id="T50106">
    <property type="entry name" value="T50106"/>
</dbReference>
<dbReference type="RefSeq" id="NP_593659.1">
    <property type="nucleotide sequence ID" value="NM_001019091.2"/>
</dbReference>
<dbReference type="SMR" id="Q9UR39"/>
<dbReference type="BioGRID" id="278830">
    <property type="interactions" value="24"/>
</dbReference>
<dbReference type="FunCoup" id="Q9UR39">
    <property type="interactions" value="75"/>
</dbReference>
<dbReference type="STRING" id="284812.Q9UR39"/>
<dbReference type="iPTMnet" id="Q9UR39"/>
<dbReference type="SwissPalm" id="Q9UR39"/>
<dbReference type="PaxDb" id="4896-SPAC1783.04c.1"/>
<dbReference type="EnsemblFungi" id="SPAC1783.04c.1">
    <property type="protein sequence ID" value="SPAC1783.04c.1:pep"/>
    <property type="gene ID" value="SPAC1783.04c"/>
</dbReference>
<dbReference type="GeneID" id="2542366"/>
<dbReference type="KEGG" id="spo:2542366"/>
<dbReference type="PomBase" id="SPAC1783.04c">
    <property type="gene designation" value="hst4"/>
</dbReference>
<dbReference type="VEuPathDB" id="FungiDB:SPAC1783.04c"/>
<dbReference type="eggNOG" id="KOG2684">
    <property type="taxonomic scope" value="Eukaryota"/>
</dbReference>
<dbReference type="HOGENOM" id="CLU_021544_1_2_1"/>
<dbReference type="InParanoid" id="Q9UR39"/>
<dbReference type="OMA" id="QLHGSIN"/>
<dbReference type="PhylomeDB" id="Q9UR39"/>
<dbReference type="PRO" id="PR:Q9UR39"/>
<dbReference type="Proteomes" id="UP000002485">
    <property type="component" value="Chromosome I"/>
</dbReference>
<dbReference type="GO" id="GO:0000785">
    <property type="term" value="C:chromatin"/>
    <property type="evidence" value="ECO:0000314"/>
    <property type="project" value="PomBase"/>
</dbReference>
<dbReference type="GO" id="GO:0099115">
    <property type="term" value="C:chromosome, subtelomeric region"/>
    <property type="evidence" value="ECO:0000314"/>
    <property type="project" value="PomBase"/>
</dbReference>
<dbReference type="GO" id="GO:0031934">
    <property type="term" value="C:mating-type region heterochromatin"/>
    <property type="evidence" value="ECO:0000314"/>
    <property type="project" value="PomBase"/>
</dbReference>
<dbReference type="GO" id="GO:0005730">
    <property type="term" value="C:nucleolus"/>
    <property type="evidence" value="ECO:0000314"/>
    <property type="project" value="PomBase"/>
</dbReference>
<dbReference type="GO" id="GO:0005634">
    <property type="term" value="C:nucleus"/>
    <property type="evidence" value="ECO:0000314"/>
    <property type="project" value="PomBase"/>
</dbReference>
<dbReference type="GO" id="GO:0005721">
    <property type="term" value="C:pericentric heterochromatin"/>
    <property type="evidence" value="ECO:0000314"/>
    <property type="project" value="PomBase"/>
</dbReference>
<dbReference type="GO" id="GO:0033553">
    <property type="term" value="C:rDNA heterochromatin"/>
    <property type="evidence" value="ECO:0000314"/>
    <property type="project" value="PomBase"/>
</dbReference>
<dbReference type="GO" id="GO:0017136">
    <property type="term" value="F:histone deacetylase activity, NAD-dependent"/>
    <property type="evidence" value="ECO:0000318"/>
    <property type="project" value="GO_Central"/>
</dbReference>
<dbReference type="GO" id="GO:0032041">
    <property type="term" value="F:histone H3K14 deacetylase activity, NAD-dependent"/>
    <property type="evidence" value="ECO:0000269"/>
    <property type="project" value="PomBase"/>
</dbReference>
<dbReference type="GO" id="GO:0140765">
    <property type="term" value="F:histone H3K56 deacetylase activity, NAD-dependent"/>
    <property type="evidence" value="ECO:0000315"/>
    <property type="project" value="PomBase"/>
</dbReference>
<dbReference type="GO" id="GO:0046872">
    <property type="term" value="F:metal ion binding"/>
    <property type="evidence" value="ECO:0007669"/>
    <property type="project" value="UniProtKB-KW"/>
</dbReference>
<dbReference type="GO" id="GO:0070403">
    <property type="term" value="F:NAD+ binding"/>
    <property type="evidence" value="ECO:0000318"/>
    <property type="project" value="GO_Central"/>
</dbReference>
<dbReference type="GO" id="GO:0140861">
    <property type="term" value="P:DNA repair-dependent chromatin remodeling"/>
    <property type="evidence" value="ECO:0000315"/>
    <property type="project" value="PomBase"/>
</dbReference>
<dbReference type="GO" id="GO:0000122">
    <property type="term" value="P:negative regulation of transcription by RNA polymerase II"/>
    <property type="evidence" value="ECO:0000315"/>
    <property type="project" value="PomBase"/>
</dbReference>
<dbReference type="GO" id="GO:0031508">
    <property type="term" value="P:pericentric heterochromatin formation"/>
    <property type="evidence" value="ECO:0000315"/>
    <property type="project" value="PomBase"/>
</dbReference>
<dbReference type="GO" id="GO:0000183">
    <property type="term" value="P:rDNA heterochromatin formation"/>
    <property type="evidence" value="ECO:0000318"/>
    <property type="project" value="GO_Central"/>
</dbReference>
<dbReference type="GO" id="GO:1990414">
    <property type="term" value="P:replication-born double-strand break repair via sister chromatid exchange"/>
    <property type="evidence" value="ECO:0000318"/>
    <property type="project" value="GO_Central"/>
</dbReference>
<dbReference type="GO" id="GO:0031509">
    <property type="term" value="P:subtelomeric heterochromatin formation"/>
    <property type="evidence" value="ECO:0000315"/>
    <property type="project" value="PomBase"/>
</dbReference>
<dbReference type="CDD" id="cd01407">
    <property type="entry name" value="SIR2-fam"/>
    <property type="match status" value="1"/>
</dbReference>
<dbReference type="Gene3D" id="3.30.1600.10">
    <property type="entry name" value="SIR2/SIRT2 'Small Domain"/>
    <property type="match status" value="1"/>
</dbReference>
<dbReference type="Gene3D" id="3.40.50.1220">
    <property type="entry name" value="TPP-binding domain"/>
    <property type="match status" value="1"/>
</dbReference>
<dbReference type="InterPro" id="IPR029035">
    <property type="entry name" value="DHS-like_NAD/FAD-binding_dom"/>
</dbReference>
<dbReference type="InterPro" id="IPR050134">
    <property type="entry name" value="NAD-dep_sirtuin_deacylases"/>
</dbReference>
<dbReference type="InterPro" id="IPR003000">
    <property type="entry name" value="Sirtuin"/>
</dbReference>
<dbReference type="InterPro" id="IPR026591">
    <property type="entry name" value="Sirtuin_cat_small_dom_sf"/>
</dbReference>
<dbReference type="InterPro" id="IPR026590">
    <property type="entry name" value="Ssirtuin_cat_dom"/>
</dbReference>
<dbReference type="PANTHER" id="PTHR11085:SF15">
    <property type="entry name" value="NAD-DEPENDENT HISTONE DEACETYLASE HST4"/>
    <property type="match status" value="1"/>
</dbReference>
<dbReference type="PANTHER" id="PTHR11085">
    <property type="entry name" value="NAD-DEPENDENT PROTEIN DEACYLASE SIRTUIN-5, MITOCHONDRIAL-RELATED"/>
    <property type="match status" value="1"/>
</dbReference>
<dbReference type="Pfam" id="PF02146">
    <property type="entry name" value="SIR2"/>
    <property type="match status" value="1"/>
</dbReference>
<dbReference type="SUPFAM" id="SSF52467">
    <property type="entry name" value="DHS-like NAD/FAD-binding domain"/>
    <property type="match status" value="1"/>
</dbReference>
<dbReference type="PROSITE" id="PS50305">
    <property type="entry name" value="SIRTUIN"/>
    <property type="match status" value="1"/>
</dbReference>
<organism>
    <name type="scientific">Schizosaccharomyces pombe (strain 972 / ATCC 24843)</name>
    <name type="common">Fission yeast</name>
    <dbReference type="NCBI Taxonomy" id="284812"/>
    <lineage>
        <taxon>Eukaryota</taxon>
        <taxon>Fungi</taxon>
        <taxon>Dikarya</taxon>
        <taxon>Ascomycota</taxon>
        <taxon>Taphrinomycotina</taxon>
        <taxon>Schizosaccharomycetes</taxon>
        <taxon>Schizosaccharomycetales</taxon>
        <taxon>Schizosaccharomycetaceae</taxon>
        <taxon>Schizosaccharomyces</taxon>
    </lineage>
</organism>
<accession>Q9UR39</accession>
<comment type="function">
    <text evidence="4">NAD-dependent histone deacetylase, which contributes to both telomeric and centromeric silencing, proper cell cycle progression, DNA damage control, recombination, and genomic maintenance.</text>
</comment>
<comment type="catalytic activity">
    <reaction evidence="2">
        <text>N(6)-acetyl-L-lysyl-[protein] + NAD(+) + H2O = 2''-O-acetyl-ADP-D-ribose + nicotinamide + L-lysyl-[protein]</text>
        <dbReference type="Rhea" id="RHEA:43636"/>
        <dbReference type="Rhea" id="RHEA-COMP:9752"/>
        <dbReference type="Rhea" id="RHEA-COMP:10731"/>
        <dbReference type="ChEBI" id="CHEBI:15377"/>
        <dbReference type="ChEBI" id="CHEBI:17154"/>
        <dbReference type="ChEBI" id="CHEBI:29969"/>
        <dbReference type="ChEBI" id="CHEBI:57540"/>
        <dbReference type="ChEBI" id="CHEBI:61930"/>
        <dbReference type="ChEBI" id="CHEBI:83767"/>
        <dbReference type="EC" id="2.3.1.286"/>
    </reaction>
</comment>
<comment type="cofactor">
    <cofactor evidence="1">
        <name>Zn(2+)</name>
        <dbReference type="ChEBI" id="CHEBI:29105"/>
    </cofactor>
    <text evidence="1">Binds 1 zinc ion per subunit.</text>
</comment>
<comment type="subcellular location">
    <subcellularLocation>
        <location evidence="4">Nucleus</location>
        <location evidence="4">Nucleolus</location>
    </subcellularLocation>
</comment>
<comment type="similarity">
    <text evidence="5">Belongs to the sirtuin family. Class I subfamily.</text>
</comment>
<proteinExistence type="evidence at transcript level"/>
<sequence length="415" mass="46590">MKVEEHVPLIQESRKRKCQSSENASKRQQLLSKLPLRLHTGNENVDLSPLVSAIRKAKRIVVVTGAGISCDAGIPDFRSSEGLFSSLRAEYKLNCSGKELFDGSVYRDLKSVNIFHAMIRKLHMLSNNARPTDFHLFLSQLAQESKLLRLYTQNIDFLETRLEGLQTCIPLPQSAPWPTTIPLHGTLEVVSCTRCSFLKKFNPDIFDRNGVTVCPDCKTENEVRRIAGKRSVIEGCLRPRIVLYNEIHPDSESIGSVCSQDLKSRPDCLIVAGTSCKIPGVKRIIKEMSNCVHKQKGNVIWLNYDEPTKDFLNLCDLVVQGDLQIAIRRLKPLLDAPSWKLKSHSAKRTSKQKSSEQTKITSSTKITKAIGLNTKSNDSSKKDNTSFQLHQVLNSIEIPKVEIKQEVEYATPSPL</sequence>
<reference key="1">
    <citation type="journal article" date="1999" name="Mol. Biol. Cell">
        <title>The Schizosaccharomyces pombe hst4(+) gene is a SIR2 homologue with silencing and centromeric functions.</title>
        <authorList>
            <person name="Freeman-Cook L.L."/>
            <person name="Sherman J.M."/>
            <person name="Brachmann C.B."/>
            <person name="Allshire R.C."/>
            <person name="Boeke J.D."/>
            <person name="Pillus L."/>
        </authorList>
    </citation>
    <scope>NUCLEOTIDE SEQUENCE [MRNA]</scope>
    <scope>FUNCTION</scope>
    <scope>SUBCELLULAR LOCATION</scope>
</reference>
<reference key="2">
    <citation type="journal article" date="2002" name="Nature">
        <title>The genome sequence of Schizosaccharomyces pombe.</title>
        <authorList>
            <person name="Wood V."/>
            <person name="Gwilliam R."/>
            <person name="Rajandream M.A."/>
            <person name="Lyne M.H."/>
            <person name="Lyne R."/>
            <person name="Stewart A."/>
            <person name="Sgouros J.G."/>
            <person name="Peat N."/>
            <person name="Hayles J."/>
            <person name="Baker S.G."/>
            <person name="Basham D."/>
            <person name="Bowman S."/>
            <person name="Brooks K."/>
            <person name="Brown D."/>
            <person name="Brown S."/>
            <person name="Chillingworth T."/>
            <person name="Churcher C.M."/>
            <person name="Collins M."/>
            <person name="Connor R."/>
            <person name="Cronin A."/>
            <person name="Davis P."/>
            <person name="Feltwell T."/>
            <person name="Fraser A."/>
            <person name="Gentles S."/>
            <person name="Goble A."/>
            <person name="Hamlin N."/>
            <person name="Harris D.E."/>
            <person name="Hidalgo J."/>
            <person name="Hodgson G."/>
            <person name="Holroyd S."/>
            <person name="Hornsby T."/>
            <person name="Howarth S."/>
            <person name="Huckle E.J."/>
            <person name="Hunt S."/>
            <person name="Jagels K."/>
            <person name="James K.D."/>
            <person name="Jones L."/>
            <person name="Jones M."/>
            <person name="Leather S."/>
            <person name="McDonald S."/>
            <person name="McLean J."/>
            <person name="Mooney P."/>
            <person name="Moule S."/>
            <person name="Mungall K.L."/>
            <person name="Murphy L.D."/>
            <person name="Niblett D."/>
            <person name="Odell C."/>
            <person name="Oliver K."/>
            <person name="O'Neil S."/>
            <person name="Pearson D."/>
            <person name="Quail M.A."/>
            <person name="Rabbinowitsch E."/>
            <person name="Rutherford K.M."/>
            <person name="Rutter S."/>
            <person name="Saunders D."/>
            <person name="Seeger K."/>
            <person name="Sharp S."/>
            <person name="Skelton J."/>
            <person name="Simmonds M.N."/>
            <person name="Squares R."/>
            <person name="Squares S."/>
            <person name="Stevens K."/>
            <person name="Taylor K."/>
            <person name="Taylor R.G."/>
            <person name="Tivey A."/>
            <person name="Walsh S.V."/>
            <person name="Warren T."/>
            <person name="Whitehead S."/>
            <person name="Woodward J.R."/>
            <person name="Volckaert G."/>
            <person name="Aert R."/>
            <person name="Robben J."/>
            <person name="Grymonprez B."/>
            <person name="Weltjens I."/>
            <person name="Vanstreels E."/>
            <person name="Rieger M."/>
            <person name="Schaefer M."/>
            <person name="Mueller-Auer S."/>
            <person name="Gabel C."/>
            <person name="Fuchs M."/>
            <person name="Duesterhoeft A."/>
            <person name="Fritzc C."/>
            <person name="Holzer E."/>
            <person name="Moestl D."/>
            <person name="Hilbert H."/>
            <person name="Borzym K."/>
            <person name="Langer I."/>
            <person name="Beck A."/>
            <person name="Lehrach H."/>
            <person name="Reinhardt R."/>
            <person name="Pohl T.M."/>
            <person name="Eger P."/>
            <person name="Zimmermann W."/>
            <person name="Wedler H."/>
            <person name="Wambutt R."/>
            <person name="Purnelle B."/>
            <person name="Goffeau A."/>
            <person name="Cadieu E."/>
            <person name="Dreano S."/>
            <person name="Gloux S."/>
            <person name="Lelaure V."/>
            <person name="Mottier S."/>
            <person name="Galibert F."/>
            <person name="Aves S.J."/>
            <person name="Xiang Z."/>
            <person name="Hunt C."/>
            <person name="Moore K."/>
            <person name="Hurst S.M."/>
            <person name="Lucas M."/>
            <person name="Rochet M."/>
            <person name="Gaillardin C."/>
            <person name="Tallada V.A."/>
            <person name="Garzon A."/>
            <person name="Thode G."/>
            <person name="Daga R.R."/>
            <person name="Cruzado L."/>
            <person name="Jimenez J."/>
            <person name="Sanchez M."/>
            <person name="del Rey F."/>
            <person name="Benito J."/>
            <person name="Dominguez A."/>
            <person name="Revuelta J.L."/>
            <person name="Moreno S."/>
            <person name="Armstrong J."/>
            <person name="Forsburg S.L."/>
            <person name="Cerutti L."/>
            <person name="Lowe T."/>
            <person name="McCombie W.R."/>
            <person name="Paulsen I."/>
            <person name="Potashkin J."/>
            <person name="Shpakovski G.V."/>
            <person name="Ussery D."/>
            <person name="Barrell B.G."/>
            <person name="Nurse P."/>
        </authorList>
    </citation>
    <scope>NUCLEOTIDE SEQUENCE [LARGE SCALE GENOMIC DNA]</scope>
    <source>
        <strain>972 / ATCC 24843</strain>
    </source>
</reference>
<gene>
    <name type="primary">hst4</name>
    <name type="ORF">SPAC1783.04c</name>
</gene>
<name>HST4_SCHPO</name>